<sequence>MGRLFGSLFHQTEELVMTPLRQRMSEDMQVRNFSLNTQLSYLRQVSLFARHFGKAPDLLGREDIRTYQVYLANEKKLAPNSIHIAIAALRFFFSVTLERDWVPAEVLPLPKKPQKLPIILSPDEVQHFLGCVLDLKHHAILTTCYAAGLRISEAVQLKPTDIDSQRMVVRVEQGKGQKDRYVMLSPKLLEILRDYWRMPRPKEWLFPGDRAGHPITRDAVGQACAKAHDLSRLSKPVTPHSLRHAFAVHLLEAGADVRTIQLLLGHRSLATTAHYLRIATNKVCATSSPFELLPRPAPTPPPAKPEYF</sequence>
<organism>
    <name type="scientific">Sinorhizobium fredii (strain NBRC 101917 / NGR234)</name>
    <dbReference type="NCBI Taxonomy" id="394"/>
    <lineage>
        <taxon>Bacteria</taxon>
        <taxon>Pseudomonadati</taxon>
        <taxon>Pseudomonadota</taxon>
        <taxon>Alphaproteobacteria</taxon>
        <taxon>Hyphomicrobiales</taxon>
        <taxon>Rhizobiaceae</taxon>
        <taxon>Sinorhizobium/Ensifer group</taxon>
        <taxon>Sinorhizobium</taxon>
    </lineage>
</organism>
<evidence type="ECO:0000255" key="1">
    <source>
        <dbReference type="PROSITE-ProRule" id="PRU01246"/>
    </source>
</evidence>
<evidence type="ECO:0000255" key="2">
    <source>
        <dbReference type="PROSITE-ProRule" id="PRU01248"/>
    </source>
</evidence>
<evidence type="ECO:0000305" key="3"/>
<name>Y4QK_SINFN</name>
<protein>
    <recommendedName>
        <fullName>Putative integrase/recombinase y4qK</fullName>
    </recommendedName>
</protein>
<dbReference type="EMBL" id="U00090">
    <property type="protein sequence ID" value="AAB92466.1"/>
    <property type="molecule type" value="Genomic_DNA"/>
</dbReference>
<dbReference type="RefSeq" id="NP_444038.1">
    <property type="nucleotide sequence ID" value="NC_000914.2"/>
</dbReference>
<dbReference type="SMR" id="P55632"/>
<dbReference type="KEGG" id="rhi:NGR_a01870"/>
<dbReference type="PATRIC" id="fig|394.7.peg.186"/>
<dbReference type="eggNOG" id="COG4974">
    <property type="taxonomic scope" value="Bacteria"/>
</dbReference>
<dbReference type="HOGENOM" id="CLU_027562_9_5_5"/>
<dbReference type="OrthoDB" id="9801717at2"/>
<dbReference type="Proteomes" id="UP000001054">
    <property type="component" value="Plasmid pNGR234a"/>
</dbReference>
<dbReference type="GO" id="GO:0003677">
    <property type="term" value="F:DNA binding"/>
    <property type="evidence" value="ECO:0007669"/>
    <property type="project" value="UniProtKB-KW"/>
</dbReference>
<dbReference type="GO" id="GO:0015074">
    <property type="term" value="P:DNA integration"/>
    <property type="evidence" value="ECO:0007669"/>
    <property type="project" value="UniProtKB-KW"/>
</dbReference>
<dbReference type="GO" id="GO:0006310">
    <property type="term" value="P:DNA recombination"/>
    <property type="evidence" value="ECO:0007669"/>
    <property type="project" value="UniProtKB-KW"/>
</dbReference>
<dbReference type="GO" id="GO:0075713">
    <property type="term" value="P:establishment of integrated proviral latency"/>
    <property type="evidence" value="ECO:0007669"/>
    <property type="project" value="UniProtKB-KW"/>
</dbReference>
<dbReference type="GO" id="GO:0046718">
    <property type="term" value="P:symbiont entry into host cell"/>
    <property type="evidence" value="ECO:0007669"/>
    <property type="project" value="UniProtKB-KW"/>
</dbReference>
<dbReference type="GO" id="GO:0044826">
    <property type="term" value="P:viral genome integration into host DNA"/>
    <property type="evidence" value="ECO:0007669"/>
    <property type="project" value="UniProtKB-KW"/>
</dbReference>
<dbReference type="CDD" id="cd01193">
    <property type="entry name" value="INT_IntI_C"/>
    <property type="match status" value="1"/>
</dbReference>
<dbReference type="Gene3D" id="1.10.150.130">
    <property type="match status" value="1"/>
</dbReference>
<dbReference type="Gene3D" id="1.10.443.10">
    <property type="entry name" value="Intergrase catalytic core"/>
    <property type="match status" value="1"/>
</dbReference>
<dbReference type="InterPro" id="IPR044068">
    <property type="entry name" value="CB"/>
</dbReference>
<dbReference type="InterPro" id="IPR011010">
    <property type="entry name" value="DNA_brk_join_enz"/>
</dbReference>
<dbReference type="InterPro" id="IPR013762">
    <property type="entry name" value="Integrase-like_cat_sf"/>
</dbReference>
<dbReference type="InterPro" id="IPR002104">
    <property type="entry name" value="Integrase_catalytic"/>
</dbReference>
<dbReference type="InterPro" id="IPR010998">
    <property type="entry name" value="Integrase_recombinase_N"/>
</dbReference>
<dbReference type="InterPro" id="IPR004107">
    <property type="entry name" value="Integrase_SAM-like_N"/>
</dbReference>
<dbReference type="InterPro" id="IPR050090">
    <property type="entry name" value="Tyrosine_recombinase_XerCD"/>
</dbReference>
<dbReference type="PANTHER" id="PTHR30349">
    <property type="entry name" value="PHAGE INTEGRASE-RELATED"/>
    <property type="match status" value="1"/>
</dbReference>
<dbReference type="PANTHER" id="PTHR30349:SF64">
    <property type="entry name" value="PROPHAGE INTEGRASE INTD-RELATED"/>
    <property type="match status" value="1"/>
</dbReference>
<dbReference type="Pfam" id="PF13495">
    <property type="entry name" value="Phage_int_SAM_4"/>
    <property type="match status" value="1"/>
</dbReference>
<dbReference type="Pfam" id="PF00589">
    <property type="entry name" value="Phage_integrase"/>
    <property type="match status" value="1"/>
</dbReference>
<dbReference type="SUPFAM" id="SSF56349">
    <property type="entry name" value="DNA breaking-rejoining enzymes"/>
    <property type="match status" value="1"/>
</dbReference>
<dbReference type="PROSITE" id="PS51900">
    <property type="entry name" value="CB"/>
    <property type="match status" value="1"/>
</dbReference>
<dbReference type="PROSITE" id="PS51898">
    <property type="entry name" value="TYR_RECOMBINASE"/>
    <property type="match status" value="1"/>
</dbReference>
<geneLocation type="plasmid">
    <name>sym pNGR234a</name>
</geneLocation>
<keyword id="KW-0229">DNA integration</keyword>
<keyword id="KW-0233">DNA recombination</keyword>
<keyword id="KW-0238">DNA-binding</keyword>
<keyword id="KW-0614">Plasmid</keyword>
<keyword id="KW-1185">Reference proteome</keyword>
<keyword id="KW-0814">Transposable element</keyword>
<keyword id="KW-1179">Viral genome integration</keyword>
<keyword id="KW-1160">Virus entry into host cell</keyword>
<reference key="1">
    <citation type="journal article" date="1997" name="Nature">
        <title>Molecular basis of symbiosis between Rhizobium and legumes.</title>
        <authorList>
            <person name="Freiberg C.A."/>
            <person name="Fellay R."/>
            <person name="Bairoch A."/>
            <person name="Broughton W.J."/>
            <person name="Rosenthal A."/>
            <person name="Perret X."/>
        </authorList>
    </citation>
    <scope>NUCLEOTIDE SEQUENCE [LARGE SCALE GENOMIC DNA]</scope>
    <source>
        <strain>NBRC 101917 / NGR234</strain>
    </source>
</reference>
<reference key="2">
    <citation type="journal article" date="2009" name="Appl. Environ. Microbiol.">
        <title>Rhizobium sp. strain NGR234 possesses a remarkable number of secretion systems.</title>
        <authorList>
            <person name="Schmeisser C."/>
            <person name="Liesegang H."/>
            <person name="Krysciak D."/>
            <person name="Bakkou N."/>
            <person name="Le Quere A."/>
            <person name="Wollherr A."/>
            <person name="Heinemeyer I."/>
            <person name="Morgenstern B."/>
            <person name="Pommerening-Roeser A."/>
            <person name="Flores M."/>
            <person name="Palacios R."/>
            <person name="Brenner S."/>
            <person name="Gottschalk G."/>
            <person name="Schmitz R.A."/>
            <person name="Broughton W.J."/>
            <person name="Perret X."/>
            <person name="Strittmatter A.W."/>
            <person name="Streit W.R."/>
        </authorList>
    </citation>
    <scope>NUCLEOTIDE SEQUENCE [LARGE SCALE GENOMIC DNA]</scope>
    <source>
        <strain>NBRC 101917 / NGR234</strain>
    </source>
</reference>
<feature type="chain" id="PRO_0000197574" description="Putative integrase/recombinase y4qK">
    <location>
        <begin position="1"/>
        <end position="308"/>
    </location>
</feature>
<feature type="domain" description="Core-binding (CB)" evidence="2">
    <location>
        <begin position="15"/>
        <end position="97"/>
    </location>
</feature>
<feature type="domain" description="Tyr recombinase" evidence="1">
    <location>
        <begin position="115"/>
        <end position="288"/>
    </location>
</feature>
<feature type="active site" evidence="1">
    <location>
        <position position="150"/>
    </location>
</feature>
<feature type="active site" evidence="1">
    <location>
        <position position="175"/>
    </location>
</feature>
<feature type="active site" evidence="1">
    <location>
        <position position="240"/>
    </location>
</feature>
<feature type="active site" evidence="1">
    <location>
        <position position="243"/>
    </location>
</feature>
<feature type="active site" evidence="1">
    <location>
        <position position="266"/>
    </location>
</feature>
<feature type="active site" description="O-(3'-phospho-DNA)-tyrosine intermediate" evidence="1">
    <location>
        <position position="275"/>
    </location>
</feature>
<comment type="function">
    <text>May function as an integrase.</text>
</comment>
<comment type="similarity">
    <text evidence="3">Belongs to the 'phage' integrase family.</text>
</comment>
<proteinExistence type="inferred from homology"/>
<accession>P55632</accession>
<gene>
    <name type="ordered locus">NGR_a01870</name>
    <name type="ORF">y4qK</name>
</gene>